<keyword id="KW-0028">Amino-acid biosynthesis</keyword>
<keyword id="KW-0963">Cytoplasm</keyword>
<keyword id="KW-0368">Histidine biosynthesis</keyword>
<keyword id="KW-0456">Lyase</keyword>
<keyword id="KW-1185">Reference proteome</keyword>
<comment type="catalytic activity">
    <reaction evidence="1">
        <text>D-erythro-1-(imidazol-4-yl)glycerol 3-phosphate = 3-(imidazol-4-yl)-2-oxopropyl phosphate + H2O</text>
        <dbReference type="Rhea" id="RHEA:11040"/>
        <dbReference type="ChEBI" id="CHEBI:15377"/>
        <dbReference type="ChEBI" id="CHEBI:57766"/>
        <dbReference type="ChEBI" id="CHEBI:58278"/>
        <dbReference type="EC" id="4.2.1.19"/>
    </reaction>
</comment>
<comment type="pathway">
    <text evidence="1">Amino-acid biosynthesis; L-histidine biosynthesis; L-histidine from 5-phospho-alpha-D-ribose 1-diphosphate: step 6/9.</text>
</comment>
<comment type="subcellular location">
    <subcellularLocation>
        <location evidence="1">Cytoplasm</location>
    </subcellularLocation>
</comment>
<comment type="similarity">
    <text evidence="1">Belongs to the imidazoleglycerol-phosphate dehydratase family.</text>
</comment>
<organism>
    <name type="scientific">Chromobacterium violaceum (strain ATCC 12472 / DSM 30191 / JCM 1249 / CCUG 213 / NBRC 12614 / NCIMB 9131 / NCTC 9757 / MK)</name>
    <dbReference type="NCBI Taxonomy" id="243365"/>
    <lineage>
        <taxon>Bacteria</taxon>
        <taxon>Pseudomonadati</taxon>
        <taxon>Pseudomonadota</taxon>
        <taxon>Betaproteobacteria</taxon>
        <taxon>Neisseriales</taxon>
        <taxon>Chromobacteriaceae</taxon>
        <taxon>Chromobacterium</taxon>
    </lineage>
</organism>
<gene>
    <name evidence="1" type="primary">hisB</name>
    <name type="ordered locus">CV_0614</name>
</gene>
<reference key="1">
    <citation type="journal article" date="2003" name="Proc. Natl. Acad. Sci. U.S.A.">
        <title>The complete genome sequence of Chromobacterium violaceum reveals remarkable and exploitable bacterial adaptability.</title>
        <authorList>
            <person name="Vasconcelos A.T.R."/>
            <person name="de Almeida D.F."/>
            <person name="Hungria M."/>
            <person name="Guimaraes C.T."/>
            <person name="Antonio R.V."/>
            <person name="Almeida F.C."/>
            <person name="de Almeida L.G.P."/>
            <person name="de Almeida R."/>
            <person name="Alves-Gomes J.A."/>
            <person name="Andrade E.M."/>
            <person name="Araripe J."/>
            <person name="de Araujo M.F.F."/>
            <person name="Astolfi-Filho S."/>
            <person name="Azevedo V."/>
            <person name="Baptista A.J."/>
            <person name="Bataus L.A.M."/>
            <person name="Batista J.S."/>
            <person name="Belo A."/>
            <person name="van den Berg C."/>
            <person name="Bogo M."/>
            <person name="Bonatto S."/>
            <person name="Bordignon J."/>
            <person name="Brigido M.M."/>
            <person name="Brito C.A."/>
            <person name="Brocchi M."/>
            <person name="Burity H.A."/>
            <person name="Camargo A.A."/>
            <person name="Cardoso D.D.P."/>
            <person name="Carneiro N.P."/>
            <person name="Carraro D.M."/>
            <person name="Carvalho C.M.B."/>
            <person name="Cascardo J.C.M."/>
            <person name="Cavada B.S."/>
            <person name="Chueire L.M.O."/>
            <person name="Creczynski-Pasa T.B."/>
            <person name="Cunha-Junior N.C."/>
            <person name="Fagundes N."/>
            <person name="Falcao C.L."/>
            <person name="Fantinatti F."/>
            <person name="Farias I.P."/>
            <person name="Felipe M.S.S."/>
            <person name="Ferrari L.P."/>
            <person name="Ferro J.A."/>
            <person name="Ferro M.I.T."/>
            <person name="Franco G.R."/>
            <person name="Freitas N.S.A."/>
            <person name="Furlan L.R."/>
            <person name="Gazzinelli R.T."/>
            <person name="Gomes E.A."/>
            <person name="Goncalves P.R."/>
            <person name="Grangeiro T.B."/>
            <person name="Grattapaglia D."/>
            <person name="Grisard E.C."/>
            <person name="Hanna E.S."/>
            <person name="Jardim S.N."/>
            <person name="Laurino J."/>
            <person name="Leoi L.C.T."/>
            <person name="Lima L.F.A."/>
            <person name="Loureiro M.F."/>
            <person name="Lyra M.C.C.P."/>
            <person name="Madeira H.M.F."/>
            <person name="Manfio G.P."/>
            <person name="Maranhao A.Q."/>
            <person name="Martins W.S."/>
            <person name="di Mauro S.M.Z."/>
            <person name="de Medeiros S.R.B."/>
            <person name="Meissner R.V."/>
            <person name="Moreira M.A.M."/>
            <person name="Nascimento F.F."/>
            <person name="Nicolas M.F."/>
            <person name="Oliveira J.G."/>
            <person name="Oliveira S.C."/>
            <person name="Paixao R.F.C."/>
            <person name="Parente J.A."/>
            <person name="Pedrosa F.O."/>
            <person name="Pena S.D.J."/>
            <person name="Pereira J.O."/>
            <person name="Pereira M."/>
            <person name="Pinto L.S.R.C."/>
            <person name="Pinto L.S."/>
            <person name="Porto J.I.R."/>
            <person name="Potrich D.P."/>
            <person name="Ramalho-Neto C.E."/>
            <person name="Reis A.M.M."/>
            <person name="Rigo L.U."/>
            <person name="Rondinelli E."/>
            <person name="Santos E.B.P."/>
            <person name="Santos F.R."/>
            <person name="Schneider M.P.C."/>
            <person name="Seuanez H.N."/>
            <person name="Silva A.M.R."/>
            <person name="da Silva A.L.C."/>
            <person name="Silva D.W."/>
            <person name="Silva R."/>
            <person name="Simoes I.C."/>
            <person name="Simon D."/>
            <person name="Soares C.M.A."/>
            <person name="Soares R.B.A."/>
            <person name="Souza E.M."/>
            <person name="Souza K.R.L."/>
            <person name="Souza R.C."/>
            <person name="Steffens M.B.R."/>
            <person name="Steindel M."/>
            <person name="Teixeira S.R."/>
            <person name="Urmenyi T."/>
            <person name="Vettore A."/>
            <person name="Wassem R."/>
            <person name="Zaha A."/>
            <person name="Simpson A.J.G."/>
        </authorList>
    </citation>
    <scope>NUCLEOTIDE SEQUENCE [LARGE SCALE GENOMIC DNA]</scope>
    <source>
        <strain>ATCC 12472 / DSM 30191 / JCM 1249 / CCUG 213 / NBRC 12614 / NCIMB 9131 / NCTC 9757 / MK</strain>
    </source>
</reference>
<protein>
    <recommendedName>
        <fullName evidence="1">Imidazoleglycerol-phosphate dehydratase</fullName>
        <shortName evidence="1">IGPD</shortName>
        <ecNumber evidence="1">4.2.1.19</ecNumber>
    </recommendedName>
</protein>
<feature type="chain" id="PRO_0000158123" description="Imidazoleglycerol-phosphate dehydratase">
    <location>
        <begin position="1"/>
        <end position="197"/>
    </location>
</feature>
<dbReference type="EC" id="4.2.1.19" evidence="1"/>
<dbReference type="EMBL" id="AE016825">
    <property type="protein sequence ID" value="AAQ58290.1"/>
    <property type="molecule type" value="Genomic_DNA"/>
</dbReference>
<dbReference type="RefSeq" id="WP_011134169.1">
    <property type="nucleotide sequence ID" value="NC_005085.1"/>
</dbReference>
<dbReference type="SMR" id="Q7P0F3"/>
<dbReference type="STRING" id="243365.CV_0614"/>
<dbReference type="GeneID" id="66365480"/>
<dbReference type="KEGG" id="cvi:CV_0614"/>
<dbReference type="eggNOG" id="COG0131">
    <property type="taxonomic scope" value="Bacteria"/>
</dbReference>
<dbReference type="HOGENOM" id="CLU_044308_3_0_4"/>
<dbReference type="OrthoDB" id="9790411at2"/>
<dbReference type="UniPathway" id="UPA00031">
    <property type="reaction ID" value="UER00011"/>
</dbReference>
<dbReference type="Proteomes" id="UP000001424">
    <property type="component" value="Chromosome"/>
</dbReference>
<dbReference type="GO" id="GO:0005737">
    <property type="term" value="C:cytoplasm"/>
    <property type="evidence" value="ECO:0007669"/>
    <property type="project" value="UniProtKB-SubCell"/>
</dbReference>
<dbReference type="GO" id="GO:0004424">
    <property type="term" value="F:imidazoleglycerol-phosphate dehydratase activity"/>
    <property type="evidence" value="ECO:0007669"/>
    <property type="project" value="UniProtKB-UniRule"/>
</dbReference>
<dbReference type="GO" id="GO:0000105">
    <property type="term" value="P:L-histidine biosynthetic process"/>
    <property type="evidence" value="ECO:0007669"/>
    <property type="project" value="UniProtKB-UniRule"/>
</dbReference>
<dbReference type="CDD" id="cd07914">
    <property type="entry name" value="IGPD"/>
    <property type="match status" value="1"/>
</dbReference>
<dbReference type="FunFam" id="3.30.230.40:FF:000002">
    <property type="entry name" value="Imidazoleglycerol-phosphate dehydratase"/>
    <property type="match status" value="1"/>
</dbReference>
<dbReference type="FunFam" id="3.30.230.40:FF:000003">
    <property type="entry name" value="Imidazoleglycerol-phosphate dehydratase HisB"/>
    <property type="match status" value="1"/>
</dbReference>
<dbReference type="Gene3D" id="3.30.230.40">
    <property type="entry name" value="Imidazole glycerol phosphate dehydratase, domain 1"/>
    <property type="match status" value="2"/>
</dbReference>
<dbReference type="HAMAP" id="MF_00076">
    <property type="entry name" value="HisB"/>
    <property type="match status" value="1"/>
</dbReference>
<dbReference type="InterPro" id="IPR038494">
    <property type="entry name" value="IGPD_sf"/>
</dbReference>
<dbReference type="InterPro" id="IPR000807">
    <property type="entry name" value="ImidazoleglycerolP_deHydtase"/>
</dbReference>
<dbReference type="InterPro" id="IPR020565">
    <property type="entry name" value="ImidazoleglycerP_deHydtase_CS"/>
</dbReference>
<dbReference type="InterPro" id="IPR020568">
    <property type="entry name" value="Ribosomal_Su5_D2-typ_SF"/>
</dbReference>
<dbReference type="NCBIfam" id="NF002106">
    <property type="entry name" value="PRK00951.1-1"/>
    <property type="match status" value="1"/>
</dbReference>
<dbReference type="NCBIfam" id="NF002109">
    <property type="entry name" value="PRK00951.1-5"/>
    <property type="match status" value="1"/>
</dbReference>
<dbReference type="NCBIfam" id="NF002111">
    <property type="entry name" value="PRK00951.2-1"/>
    <property type="match status" value="1"/>
</dbReference>
<dbReference type="NCBIfam" id="NF002114">
    <property type="entry name" value="PRK00951.2-4"/>
    <property type="match status" value="1"/>
</dbReference>
<dbReference type="PANTHER" id="PTHR23133:SF2">
    <property type="entry name" value="IMIDAZOLEGLYCEROL-PHOSPHATE DEHYDRATASE"/>
    <property type="match status" value="1"/>
</dbReference>
<dbReference type="PANTHER" id="PTHR23133">
    <property type="entry name" value="IMIDAZOLEGLYCEROL-PHOSPHATE DEHYDRATASE HIS7"/>
    <property type="match status" value="1"/>
</dbReference>
<dbReference type="Pfam" id="PF00475">
    <property type="entry name" value="IGPD"/>
    <property type="match status" value="1"/>
</dbReference>
<dbReference type="SUPFAM" id="SSF54211">
    <property type="entry name" value="Ribosomal protein S5 domain 2-like"/>
    <property type="match status" value="2"/>
</dbReference>
<dbReference type="PROSITE" id="PS00954">
    <property type="entry name" value="IGP_DEHYDRATASE_1"/>
    <property type="match status" value="1"/>
</dbReference>
<dbReference type="PROSITE" id="PS00955">
    <property type="entry name" value="IGP_DEHYDRATASE_2"/>
    <property type="match status" value="1"/>
</dbReference>
<accession>Q7P0F3</accession>
<proteinExistence type="inferred from homology"/>
<evidence type="ECO:0000255" key="1">
    <source>
        <dbReference type="HAMAP-Rule" id="MF_00076"/>
    </source>
</evidence>
<name>HIS7_CHRVO</name>
<sequence>MRTATVTRNTLETQITVSLNLDGTGVGRFETGVPFLDHMMDQIARHGLIDLDVKAVGDLHIDAHHTVEDIGITLGQAFAKAIGDKKGIRRYGHAYVPLDEALSRVVIDLSGRPGLVYNVDYTRACIGQFDVDLFSEFFHGFVNHSMVTLHIDNLRGHNSHHQAETIFKAFGRALRMACEHDERMAGITPSTKGTLSV</sequence>